<organism>
    <name type="scientific">Oryza sativa subsp. japonica</name>
    <name type="common">Rice</name>
    <dbReference type="NCBI Taxonomy" id="39947"/>
    <lineage>
        <taxon>Eukaryota</taxon>
        <taxon>Viridiplantae</taxon>
        <taxon>Streptophyta</taxon>
        <taxon>Embryophyta</taxon>
        <taxon>Tracheophyta</taxon>
        <taxon>Spermatophyta</taxon>
        <taxon>Magnoliopsida</taxon>
        <taxon>Liliopsida</taxon>
        <taxon>Poales</taxon>
        <taxon>Poaceae</taxon>
        <taxon>BOP clade</taxon>
        <taxon>Oryzoideae</taxon>
        <taxon>Oryzeae</taxon>
        <taxon>Oryzinae</taxon>
        <taxon>Oryza</taxon>
        <taxon>Oryza sativa</taxon>
    </lineage>
</organism>
<keyword id="KW-1185">Reference proteome</keyword>
<keyword id="KW-0732">Signal</keyword>
<accession>Q75G46</accession>
<proteinExistence type="evidence at transcript level"/>
<comment type="tissue specificity">
    <text evidence="3">Expressed in shoot and panicles.</text>
</comment>
<comment type="sequence caution" evidence="4">
    <conflict type="erroneous gene model prediction">
        <sequence resource="EMBL-CDS" id="AAT07562"/>
    </conflict>
</comment>
<comment type="sequence caution" evidence="4">
    <conflict type="erroneous gene model prediction">
        <sequence resource="EMBL-CDS" id="AAT07630"/>
    </conflict>
</comment>
<sequence length="314" mass="33154">MDLVRLTSLLPPSVMGGPTSPRPLWSNQGLPFRFQSKNRFSPVAAARASHAASPAELYWKIALPTSPMPGAIRDLINPARSASQEDTDMDEVSTDAVFFLEKDLFPGSKITLHFTRGGACAMVLLRGRADAIPFASEKLPEILTQLSVPAGSRAAEDMRTTLAECEAALLGARDQAKHCVTSLESMVEFAAASLGTRDIRAVSTEVIGTGAAETPRQEYTVEAVKPVVSVSGGNMVTCHGMPYAYAVFGCHTTTATAYAVTLAGADGTRAEALATCHGDAFPGVAEAYERVGVAAGSVPVCHIMPLGDMLWVRN</sequence>
<gene>
    <name type="primary">BURP8</name>
    <name type="ordered locus">Os05g0221900</name>
    <name type="ordered locus">LOC_Os05g13490</name>
    <name type="ORF">B1003C08.11</name>
    <name type="ORF">OSJNBb0043H23.9</name>
</gene>
<protein>
    <recommendedName>
        <fullName>BURP domain-containing protein 8</fullName>
        <shortName>OsBURP08</shortName>
    </recommendedName>
</protein>
<name>BURP8_ORYSJ</name>
<dbReference type="EMBL" id="AC135422">
    <property type="protein sequence ID" value="AAT07630.1"/>
    <property type="status" value="ALT_SEQ"/>
    <property type="molecule type" value="Genomic_DNA"/>
</dbReference>
<dbReference type="EMBL" id="AC146716">
    <property type="protein sequence ID" value="AAT07562.1"/>
    <property type="status" value="ALT_SEQ"/>
    <property type="molecule type" value="Genomic_DNA"/>
</dbReference>
<dbReference type="EMBL" id="AP014961">
    <property type="status" value="NOT_ANNOTATED_CDS"/>
    <property type="molecule type" value="Genomic_DNA"/>
</dbReference>
<dbReference type="SMR" id="Q75G46"/>
<dbReference type="FunCoup" id="Q75G46">
    <property type="interactions" value="4"/>
</dbReference>
<dbReference type="STRING" id="39947.Q75G46"/>
<dbReference type="PaxDb" id="39947-Q75G46"/>
<dbReference type="eggNOG" id="ENOG502QT2V">
    <property type="taxonomic scope" value="Eukaryota"/>
</dbReference>
<dbReference type="InParanoid" id="Q75G46"/>
<dbReference type="Proteomes" id="UP000000763">
    <property type="component" value="Chromosome 5"/>
</dbReference>
<dbReference type="Proteomes" id="UP000059680">
    <property type="component" value="Chromosome 5"/>
</dbReference>
<dbReference type="InterPro" id="IPR044816">
    <property type="entry name" value="BURP"/>
</dbReference>
<dbReference type="InterPro" id="IPR004873">
    <property type="entry name" value="BURP_dom"/>
</dbReference>
<dbReference type="PANTHER" id="PTHR31236">
    <property type="entry name" value="BURP DOMAIN PROTEIN USPL1-LIKE"/>
    <property type="match status" value="1"/>
</dbReference>
<dbReference type="PANTHER" id="PTHR31236:SF31">
    <property type="entry name" value="BURP DOMAIN-CONTAINING PROTEIN 7"/>
    <property type="match status" value="1"/>
</dbReference>
<dbReference type="Pfam" id="PF03181">
    <property type="entry name" value="BURP"/>
    <property type="match status" value="1"/>
</dbReference>
<dbReference type="SMART" id="SM01045">
    <property type="entry name" value="BURP"/>
    <property type="match status" value="1"/>
</dbReference>
<dbReference type="PROSITE" id="PS51277">
    <property type="entry name" value="BURP"/>
    <property type="match status" value="1"/>
</dbReference>
<reference key="1">
    <citation type="journal article" date="2005" name="Mol. Genet. Genomics">
        <title>A fine physical map of the rice chromosome 5.</title>
        <authorList>
            <person name="Cheng C.-H."/>
            <person name="Chung M.C."/>
            <person name="Liu S.-M."/>
            <person name="Chen S.-K."/>
            <person name="Kao F.Y."/>
            <person name="Lin S.-J."/>
            <person name="Hsiao S.-H."/>
            <person name="Tseng I.C."/>
            <person name="Hsing Y.-I.C."/>
            <person name="Wu H.-P."/>
            <person name="Chen C.-S."/>
            <person name="Shaw J.-F."/>
            <person name="Wu J."/>
            <person name="Matsumoto T."/>
            <person name="Sasaki T."/>
            <person name="Chen H.-C."/>
            <person name="Chow T.-Y."/>
        </authorList>
    </citation>
    <scope>NUCLEOTIDE SEQUENCE [LARGE SCALE GENOMIC DNA]</scope>
    <source>
        <strain>cv. Nipponbare</strain>
    </source>
</reference>
<reference key="2">
    <citation type="journal article" date="2005" name="Nature">
        <title>The map-based sequence of the rice genome.</title>
        <authorList>
            <consortium name="International rice genome sequencing project (IRGSP)"/>
        </authorList>
    </citation>
    <scope>NUCLEOTIDE SEQUENCE [LARGE SCALE GENOMIC DNA]</scope>
    <source>
        <strain>cv. Nipponbare</strain>
    </source>
</reference>
<reference key="3">
    <citation type="journal article" date="2013" name="Rice">
        <title>Improvement of the Oryza sativa Nipponbare reference genome using next generation sequence and optical map data.</title>
        <authorList>
            <person name="Kawahara Y."/>
            <person name="de la Bastide M."/>
            <person name="Hamilton J.P."/>
            <person name="Kanamori H."/>
            <person name="McCombie W.R."/>
            <person name="Ouyang S."/>
            <person name="Schwartz D.C."/>
            <person name="Tanaka T."/>
            <person name="Wu J."/>
            <person name="Zhou S."/>
            <person name="Childs K.L."/>
            <person name="Davidson R.M."/>
            <person name="Lin H."/>
            <person name="Quesada-Ocampo L."/>
            <person name="Vaillancourt B."/>
            <person name="Sakai H."/>
            <person name="Lee S.S."/>
            <person name="Kim J."/>
            <person name="Numa H."/>
            <person name="Itoh T."/>
            <person name="Buell C.R."/>
            <person name="Matsumoto T."/>
        </authorList>
    </citation>
    <scope>GENOME REANNOTATION</scope>
    <source>
        <strain>cv. Nipponbare</strain>
    </source>
</reference>
<reference key="4">
    <citation type="journal article" date="2009" name="Planta">
        <title>Genome-wide identification of BURP domain-containing genes in rice reveals a gene family with diverse structures and responses to abiotic stresses.</title>
        <authorList>
            <person name="Ding X."/>
            <person name="Hou X."/>
            <person name="Xie K."/>
            <person name="Xiong L."/>
        </authorList>
    </citation>
    <scope>TISSUE SPECIFICITY</scope>
    <scope>GENE NOMENCLATURE</scope>
</reference>
<feature type="signal peptide" evidence="1">
    <location>
        <begin position="1"/>
        <end position="16"/>
    </location>
</feature>
<feature type="chain" id="PRO_0000375835" description="BURP domain-containing protein 8">
    <location>
        <begin position="17"/>
        <end position="314"/>
    </location>
</feature>
<feature type="domain" description="BURP" evidence="2">
    <location>
        <begin position="98"/>
        <end position="314"/>
    </location>
</feature>
<evidence type="ECO:0000255" key="1"/>
<evidence type="ECO:0000255" key="2">
    <source>
        <dbReference type="PROSITE-ProRule" id="PRU00604"/>
    </source>
</evidence>
<evidence type="ECO:0000269" key="3">
    <source>
    </source>
</evidence>
<evidence type="ECO:0000305" key="4"/>